<protein>
    <recommendedName>
        <fullName>pH-response regulator protein palI/RIM9</fullName>
    </recommendedName>
</protein>
<evidence type="ECO:0000250" key="1"/>
<evidence type="ECO:0000255" key="2"/>
<evidence type="ECO:0000305" key="3"/>
<accession>Q6FU42</accession>
<reference key="1">
    <citation type="journal article" date="2004" name="Nature">
        <title>Genome evolution in yeasts.</title>
        <authorList>
            <person name="Dujon B."/>
            <person name="Sherman D."/>
            <person name="Fischer G."/>
            <person name="Durrens P."/>
            <person name="Casaregola S."/>
            <person name="Lafontaine I."/>
            <person name="de Montigny J."/>
            <person name="Marck C."/>
            <person name="Neuveglise C."/>
            <person name="Talla E."/>
            <person name="Goffard N."/>
            <person name="Frangeul L."/>
            <person name="Aigle M."/>
            <person name="Anthouard V."/>
            <person name="Babour A."/>
            <person name="Barbe V."/>
            <person name="Barnay S."/>
            <person name="Blanchin S."/>
            <person name="Beckerich J.-M."/>
            <person name="Beyne E."/>
            <person name="Bleykasten C."/>
            <person name="Boisrame A."/>
            <person name="Boyer J."/>
            <person name="Cattolico L."/>
            <person name="Confanioleri F."/>
            <person name="de Daruvar A."/>
            <person name="Despons L."/>
            <person name="Fabre E."/>
            <person name="Fairhead C."/>
            <person name="Ferry-Dumazet H."/>
            <person name="Groppi A."/>
            <person name="Hantraye F."/>
            <person name="Hennequin C."/>
            <person name="Jauniaux N."/>
            <person name="Joyet P."/>
            <person name="Kachouri R."/>
            <person name="Kerrest A."/>
            <person name="Koszul R."/>
            <person name="Lemaire M."/>
            <person name="Lesur I."/>
            <person name="Ma L."/>
            <person name="Muller H."/>
            <person name="Nicaud J.-M."/>
            <person name="Nikolski M."/>
            <person name="Oztas S."/>
            <person name="Ozier-Kalogeropoulos O."/>
            <person name="Pellenz S."/>
            <person name="Potier S."/>
            <person name="Richard G.-F."/>
            <person name="Straub M.-L."/>
            <person name="Suleau A."/>
            <person name="Swennen D."/>
            <person name="Tekaia F."/>
            <person name="Wesolowski-Louvel M."/>
            <person name="Westhof E."/>
            <person name="Wirth B."/>
            <person name="Zeniou-Meyer M."/>
            <person name="Zivanovic Y."/>
            <person name="Bolotin-Fukuhara M."/>
            <person name="Thierry A."/>
            <person name="Bouchier C."/>
            <person name="Caudron B."/>
            <person name="Scarpelli C."/>
            <person name="Gaillardin C."/>
            <person name="Weissenbach J."/>
            <person name="Wincker P."/>
            <person name="Souciet J.-L."/>
        </authorList>
    </citation>
    <scope>NUCLEOTIDE SEQUENCE [LARGE SCALE GENOMIC DNA]</scope>
    <source>
        <strain>ATCC 2001 / BCRC 20586 / JCM 3761 / NBRC 0622 / NRRL Y-65 / CBS 138</strain>
    </source>
</reference>
<keyword id="KW-1003">Cell membrane</keyword>
<keyword id="KW-0472">Membrane</keyword>
<keyword id="KW-1185">Reference proteome</keyword>
<keyword id="KW-0812">Transmembrane</keyword>
<keyword id="KW-1133">Transmembrane helix</keyword>
<dbReference type="EMBL" id="CR380952">
    <property type="protein sequence ID" value="CAG59176.1"/>
    <property type="molecule type" value="Genomic_DNA"/>
</dbReference>
<dbReference type="RefSeq" id="XP_446252.1">
    <property type="nucleotide sequence ID" value="XM_446252.1"/>
</dbReference>
<dbReference type="FunCoup" id="Q6FU42">
    <property type="interactions" value="14"/>
</dbReference>
<dbReference type="STRING" id="284593.Q6FU42"/>
<dbReference type="EnsemblFungi" id="CAGL0F06545g-T">
    <property type="protein sequence ID" value="CAGL0F06545g-T-p1"/>
    <property type="gene ID" value="CAGL0F06545g"/>
</dbReference>
<dbReference type="KEGG" id="cgr:2887915"/>
<dbReference type="CGD" id="CAL0130890">
    <property type="gene designation" value="CAGL0F06545g"/>
</dbReference>
<dbReference type="VEuPathDB" id="FungiDB:B1J91_F06545g"/>
<dbReference type="VEuPathDB" id="FungiDB:CAGL0F06545g"/>
<dbReference type="eggNOG" id="ENOG502S1J0">
    <property type="taxonomic scope" value="Eukaryota"/>
</dbReference>
<dbReference type="HOGENOM" id="CLU_084537_1_0_1"/>
<dbReference type="InParanoid" id="Q6FU42"/>
<dbReference type="OMA" id="DWPGWLM"/>
<dbReference type="Proteomes" id="UP000002428">
    <property type="component" value="Chromosome F"/>
</dbReference>
<dbReference type="GO" id="GO:0032153">
    <property type="term" value="C:cell division site"/>
    <property type="evidence" value="ECO:0007669"/>
    <property type="project" value="TreeGrafter"/>
</dbReference>
<dbReference type="GO" id="GO:0000328">
    <property type="term" value="C:fungal-type vacuole lumen"/>
    <property type="evidence" value="ECO:0007669"/>
    <property type="project" value="EnsemblFungi"/>
</dbReference>
<dbReference type="GO" id="GO:0035838">
    <property type="term" value="C:growing cell tip"/>
    <property type="evidence" value="ECO:0007669"/>
    <property type="project" value="TreeGrafter"/>
</dbReference>
<dbReference type="GO" id="GO:0005886">
    <property type="term" value="C:plasma membrane"/>
    <property type="evidence" value="ECO:0007669"/>
    <property type="project" value="UniProtKB-SubCell"/>
</dbReference>
<dbReference type="GO" id="GO:0030437">
    <property type="term" value="P:ascospore formation"/>
    <property type="evidence" value="ECO:0007669"/>
    <property type="project" value="EnsemblFungi"/>
</dbReference>
<dbReference type="InterPro" id="IPR051380">
    <property type="entry name" value="pH-response_reg_palI/RIM9"/>
</dbReference>
<dbReference type="InterPro" id="IPR009571">
    <property type="entry name" value="SUR7/Rim9-like_fungi"/>
</dbReference>
<dbReference type="PANTHER" id="PTHR28013">
    <property type="entry name" value="PROTEIN DCV1-RELATED"/>
    <property type="match status" value="1"/>
</dbReference>
<dbReference type="PANTHER" id="PTHR28013:SF3">
    <property type="entry name" value="PROTEIN DCV1-RELATED"/>
    <property type="match status" value="1"/>
</dbReference>
<dbReference type="Pfam" id="PF06687">
    <property type="entry name" value="SUR7"/>
    <property type="match status" value="1"/>
</dbReference>
<gene>
    <name type="primary">RIM9</name>
    <name type="ordered locus">CAGL0F06545g</name>
</gene>
<feature type="chain" id="PRO_0000058210" description="pH-response regulator protein palI/RIM9">
    <location>
        <begin position="1"/>
        <end position="246"/>
    </location>
</feature>
<feature type="topological domain" description="Cytoplasmic" evidence="2">
    <location>
        <begin position="1"/>
        <end position="8"/>
    </location>
</feature>
<feature type="transmembrane region" description="Helical" evidence="2">
    <location>
        <begin position="9"/>
        <end position="29"/>
    </location>
</feature>
<feature type="topological domain" description="Extracellular" evidence="2">
    <location>
        <begin position="30"/>
        <end position="91"/>
    </location>
</feature>
<feature type="transmembrane region" description="Helical" evidence="2">
    <location>
        <begin position="92"/>
        <end position="112"/>
    </location>
</feature>
<feature type="topological domain" description="Cytoplasmic" evidence="2">
    <location>
        <begin position="113"/>
        <end position="129"/>
    </location>
</feature>
<feature type="transmembrane region" description="Helical" evidence="2">
    <location>
        <begin position="130"/>
        <end position="150"/>
    </location>
</feature>
<feature type="topological domain" description="Extracellular" evidence="2">
    <location>
        <begin position="151"/>
        <end position="154"/>
    </location>
</feature>
<feature type="transmembrane region" description="Helical" evidence="2">
    <location>
        <begin position="155"/>
        <end position="175"/>
    </location>
</feature>
<feature type="topological domain" description="Cytoplasmic" evidence="2">
    <location>
        <begin position="176"/>
        <end position="246"/>
    </location>
</feature>
<organism>
    <name type="scientific">Candida glabrata (strain ATCC 2001 / BCRC 20586 / JCM 3761 / NBRC 0622 / NRRL Y-65 / CBS 138)</name>
    <name type="common">Yeast</name>
    <name type="synonym">Nakaseomyces glabratus</name>
    <dbReference type="NCBI Taxonomy" id="284593"/>
    <lineage>
        <taxon>Eukaryota</taxon>
        <taxon>Fungi</taxon>
        <taxon>Dikarya</taxon>
        <taxon>Ascomycota</taxon>
        <taxon>Saccharomycotina</taxon>
        <taxon>Saccharomycetes</taxon>
        <taxon>Saccharomycetales</taxon>
        <taxon>Saccharomycetaceae</taxon>
        <taxon>Nakaseomyces</taxon>
    </lineage>
</organism>
<name>PALI_CANGA</name>
<sequence length="246" mass="28186">MHLFDLRTLLAILVSICVVFQAFPLATVPLNKNLILGQYMGYHFGVFGWCFVDKGVTIACHCKFRPDSIETYKYTDQLLFPSLYKVTISTLLVVHPVSFAFTCILWIMALIIRLSRFGRCPIFILSAATWSLAAFLLALLSALVDLLLFVNKLKWPGWLVLASVPLMAICCSWLWSLRRQVSAIFYERKAYATQTYSRFDSMELSHIDTKFSDDQSIYETYTLERVPYSKNEAIEEPALTYYTSSS</sequence>
<comment type="function">
    <text evidence="1">Required for the proteolytic cleavage of the transcription factor RIM101 in response to alkaline ambient pH.</text>
</comment>
<comment type="subcellular location">
    <subcellularLocation>
        <location evidence="1">Cell membrane</location>
        <topology evidence="1">Multi-pass membrane protein</topology>
    </subcellularLocation>
</comment>
<comment type="similarity">
    <text evidence="3">Belongs to the palI/RIM9 family.</text>
</comment>
<proteinExistence type="inferred from homology"/>